<feature type="chain" id="PRO_0000134489" description="Probable deoxyhypusine synthase">
    <location>
        <begin position="1"/>
        <end position="310"/>
    </location>
</feature>
<feature type="active site" description="Nucleophile" evidence="1">
    <location>
        <position position="280"/>
    </location>
</feature>
<sequence>MEEVRDCRLEEGLSVEGLVECYRDIHGFMAGHLAEAVEVLREGLEASSVRVLTFTGNLVATGLRGVLAQLIDGGLFNVVFTTAGALDHDIARFMGGKYLKGRFEADDTELHRRGVHRLGNVFIPVESYGPLVERFVRTLAEQAAGVRGEWGVYELLRLAGSLMEGDRDSILAAAARRGVDVFVPGWPDGAFGTSLFMERQRGTSITVDYFRDMARLADIFFPQEGEAAALIVGGGISKHHAIWWSQFRGGLDYAVYVTTAVEYDGSLSGAHPREAVSWGKIKESSRRVVVYGDATITLPVIAYCLLHGCG</sequence>
<comment type="function">
    <text evidence="1">Catalyzes the NAD-dependent oxidative cleavage of spermidine and the subsequent transfer of the butylamine moiety of spermidine to the epsilon-amino group of a specific lysine residue of the eIF-5A precursor protein to form the intermediate deoxyhypusine residue.</text>
</comment>
<comment type="catalytic activity">
    <reaction>
        <text>[eIF5A protein]-L-lysine + spermidine = [eIF5A protein]-deoxyhypusine + propane-1,3-diamine</text>
        <dbReference type="Rhea" id="RHEA:33299"/>
        <dbReference type="Rhea" id="RHEA-COMP:10143"/>
        <dbReference type="Rhea" id="RHEA-COMP:10144"/>
        <dbReference type="ChEBI" id="CHEBI:29969"/>
        <dbReference type="ChEBI" id="CHEBI:57484"/>
        <dbReference type="ChEBI" id="CHEBI:57834"/>
        <dbReference type="ChEBI" id="CHEBI:82657"/>
        <dbReference type="EC" id="2.5.1.46"/>
    </reaction>
</comment>
<comment type="cofactor">
    <cofactor evidence="1">
        <name>NAD(+)</name>
        <dbReference type="ChEBI" id="CHEBI:57540"/>
    </cofactor>
</comment>
<comment type="pathway">
    <text>Protein modification; eIF5A hypusination.</text>
</comment>
<comment type="similarity">
    <text evidence="2">Belongs to the deoxyhypusine synthase family.</text>
</comment>
<accession>Q9YE72</accession>
<name>DHYS_AERPE</name>
<reference key="1">
    <citation type="journal article" date="1999" name="DNA Res.">
        <title>Complete genome sequence of an aerobic hyper-thermophilic crenarchaeon, Aeropyrum pernix K1.</title>
        <authorList>
            <person name="Kawarabayasi Y."/>
            <person name="Hino Y."/>
            <person name="Horikawa H."/>
            <person name="Yamazaki S."/>
            <person name="Haikawa Y."/>
            <person name="Jin-no K."/>
            <person name="Takahashi M."/>
            <person name="Sekine M."/>
            <person name="Baba S."/>
            <person name="Ankai A."/>
            <person name="Kosugi H."/>
            <person name="Hosoyama A."/>
            <person name="Fukui S."/>
            <person name="Nagai Y."/>
            <person name="Nishijima K."/>
            <person name="Nakazawa H."/>
            <person name="Takamiya M."/>
            <person name="Masuda S."/>
            <person name="Funahashi T."/>
            <person name="Tanaka T."/>
            <person name="Kudoh Y."/>
            <person name="Yamazaki J."/>
            <person name="Kushida N."/>
            <person name="Oguchi A."/>
            <person name="Aoki K."/>
            <person name="Kubota K."/>
            <person name="Nakamura Y."/>
            <person name="Nomura N."/>
            <person name="Sako Y."/>
            <person name="Kikuchi H."/>
        </authorList>
    </citation>
    <scope>NUCLEOTIDE SEQUENCE [LARGE SCALE GENOMIC DNA]</scope>
    <source>
        <strain>ATCC 700893 / DSM 11879 / JCM 9820 / NBRC 100138 / K1</strain>
    </source>
</reference>
<proteinExistence type="inferred from homology"/>
<organism>
    <name type="scientific">Aeropyrum pernix (strain ATCC 700893 / DSM 11879 / JCM 9820 / NBRC 100138 / K1)</name>
    <dbReference type="NCBI Taxonomy" id="272557"/>
    <lineage>
        <taxon>Archaea</taxon>
        <taxon>Thermoproteota</taxon>
        <taxon>Thermoprotei</taxon>
        <taxon>Desulfurococcales</taxon>
        <taxon>Desulfurococcaceae</taxon>
        <taxon>Aeropyrum</taxon>
    </lineage>
</organism>
<dbReference type="EC" id="2.5.1.46"/>
<dbReference type="EMBL" id="BA000002">
    <property type="protein sequence ID" value="BAA79674.2"/>
    <property type="molecule type" value="Genomic_DNA"/>
</dbReference>
<dbReference type="PIR" id="B72659">
    <property type="entry name" value="B72659"/>
</dbReference>
<dbReference type="RefSeq" id="WP_010865912.1">
    <property type="nucleotide sequence ID" value="NC_000854.2"/>
</dbReference>
<dbReference type="SMR" id="Q9YE72"/>
<dbReference type="STRING" id="272557.APE_0698.1"/>
<dbReference type="EnsemblBacteria" id="BAA79674">
    <property type="protein sequence ID" value="BAA79674"/>
    <property type="gene ID" value="APE_0698.1"/>
</dbReference>
<dbReference type="GeneID" id="1444830"/>
<dbReference type="KEGG" id="ape:APE_0698.1"/>
<dbReference type="PATRIC" id="fig|272557.25.peg.501"/>
<dbReference type="eggNOG" id="arCOG04142">
    <property type="taxonomic scope" value="Archaea"/>
</dbReference>
<dbReference type="UniPathway" id="UPA00354"/>
<dbReference type="Proteomes" id="UP000002518">
    <property type="component" value="Chromosome"/>
</dbReference>
<dbReference type="GO" id="GO:0005737">
    <property type="term" value="C:cytoplasm"/>
    <property type="evidence" value="ECO:0007669"/>
    <property type="project" value="TreeGrafter"/>
</dbReference>
<dbReference type="GO" id="GO:0034038">
    <property type="term" value="F:deoxyhypusine synthase activity"/>
    <property type="evidence" value="ECO:0007669"/>
    <property type="project" value="UniProtKB-UniRule"/>
</dbReference>
<dbReference type="Gene3D" id="3.40.910.10">
    <property type="entry name" value="Deoxyhypusine synthase"/>
    <property type="match status" value="1"/>
</dbReference>
<dbReference type="HAMAP" id="MF_00153">
    <property type="entry name" value="DHS"/>
    <property type="match status" value="1"/>
</dbReference>
<dbReference type="InterPro" id="IPR022899">
    <property type="entry name" value="Deoxyhypus_synthase_arc"/>
</dbReference>
<dbReference type="InterPro" id="IPR002773">
    <property type="entry name" value="Deoxyhypusine_synthase"/>
</dbReference>
<dbReference type="InterPro" id="IPR036982">
    <property type="entry name" value="Deoxyhypusine_synthase_sf"/>
</dbReference>
<dbReference type="InterPro" id="IPR029035">
    <property type="entry name" value="DHS-like_NAD/FAD-binding_dom"/>
</dbReference>
<dbReference type="NCBIfam" id="NF002294">
    <property type="entry name" value="PRK01221.1"/>
    <property type="match status" value="1"/>
</dbReference>
<dbReference type="PANTHER" id="PTHR11703">
    <property type="entry name" value="DEOXYHYPUSINE SYNTHASE"/>
    <property type="match status" value="1"/>
</dbReference>
<dbReference type="PANTHER" id="PTHR11703:SF0">
    <property type="entry name" value="DEOXYHYPUSINE SYNTHASE"/>
    <property type="match status" value="1"/>
</dbReference>
<dbReference type="Pfam" id="PF01916">
    <property type="entry name" value="DS"/>
    <property type="match status" value="1"/>
</dbReference>
<dbReference type="SUPFAM" id="SSF52467">
    <property type="entry name" value="DHS-like NAD/FAD-binding domain"/>
    <property type="match status" value="1"/>
</dbReference>
<keyword id="KW-0386">Hypusine biosynthesis</keyword>
<keyword id="KW-0520">NAD</keyword>
<keyword id="KW-1185">Reference proteome</keyword>
<keyword id="KW-0808">Transferase</keyword>
<gene>
    <name type="primary">dys</name>
    <name type="ordered locus">APE_0698.1</name>
</gene>
<evidence type="ECO:0000250" key="1"/>
<evidence type="ECO:0000305" key="2"/>
<protein>
    <recommendedName>
        <fullName>Probable deoxyhypusine synthase</fullName>
        <shortName>DHS</shortName>
        <ecNumber>2.5.1.46</ecNumber>
    </recommendedName>
</protein>